<proteinExistence type="evidence at protein level"/>
<organism>
    <name type="scientific">Cavia porcellus</name>
    <name type="common">Guinea pig</name>
    <dbReference type="NCBI Taxonomy" id="10141"/>
    <lineage>
        <taxon>Eukaryota</taxon>
        <taxon>Metazoa</taxon>
        <taxon>Chordata</taxon>
        <taxon>Craniata</taxon>
        <taxon>Vertebrata</taxon>
        <taxon>Euteleostomi</taxon>
        <taxon>Mammalia</taxon>
        <taxon>Eutheria</taxon>
        <taxon>Euarchontoglires</taxon>
        <taxon>Glires</taxon>
        <taxon>Rodentia</taxon>
        <taxon>Hystricomorpha</taxon>
        <taxon>Caviidae</taxon>
        <taxon>Cavia</taxon>
    </lineage>
</organism>
<comment type="function">
    <text evidence="1">Is, with PLP, the most abundant protein component of the myelin membrane in the CNS. Has a role in both the formation and stabilization of this compact multilayer arrangement of bilayers. Each splice variant and charge isomer may have a specialized function in the assembly of an optimized, biochemically functional myelin membrane (By similarity).</text>
</comment>
<comment type="subunit">
    <text evidence="1">Homodimer.</text>
</comment>
<comment type="subcellular location">
    <subcellularLocation>
        <location>Myelin membrane</location>
        <topology>Peripheral membrane protein</topology>
        <orientation>Cytoplasmic side</orientation>
    </subcellularLocation>
    <text>Cytoplasmic side of myelin.</text>
</comment>
<comment type="tissue specificity">
    <text>Found in both the central and the peripheral nervous system.</text>
</comment>
<comment type="PTM">
    <text evidence="8">At least 5 charge isomers; C1 (the most cationic, least modified, and most abundant form), C2, C3, C4 and C5 (the least cationic form); are produced as a result of optional post-translational modifications such as phosphorylation of serine or threonine residues, deamidation of glutamine or asparagine residues, citrullination and methylation of arginine residues. C1 and C2 are unphosphorylated, C3 and C4 are monophosphorylated and C5 is phosphorylated at two positions (PubMed:51849).</text>
</comment>
<comment type="PTM">
    <text evidence="1">Phosphorylated by TAOK2, VRK2, MAPK11, MAPK12, MAPK14 and MINK1.</text>
</comment>
<comment type="PTM">
    <text evidence="2">Proteolytically cleaved in B cell lysosomes by cathepsin CTSG which degrades the major immunogenic MBP epitope and prevents the activation of MBP-specific autoreactive T cells.</text>
</comment>
<comment type="similarity">
    <text evidence="9">Belongs to the myelin basic protein family.</text>
</comment>
<accession>P25188</accession>
<dbReference type="EMBL" id="AF074337">
    <property type="protein sequence ID" value="AAC26130.1"/>
    <property type="molecule type" value="mRNA"/>
</dbReference>
<dbReference type="PIR" id="A37246">
    <property type="entry name" value="A37246"/>
</dbReference>
<dbReference type="BMRB" id="P25188"/>
<dbReference type="SMR" id="P25188"/>
<dbReference type="STRING" id="10141.ENSCPOP00000024960"/>
<dbReference type="eggNOG" id="ENOG502S4SJ">
    <property type="taxonomic scope" value="Eukaryota"/>
</dbReference>
<dbReference type="InParanoid" id="P25188"/>
<dbReference type="Proteomes" id="UP000005447">
    <property type="component" value="Unassembled WGS sequence"/>
</dbReference>
<dbReference type="GO" id="GO:0043218">
    <property type="term" value="C:compact myelin"/>
    <property type="evidence" value="ECO:0007669"/>
    <property type="project" value="TreeGrafter"/>
</dbReference>
<dbReference type="GO" id="GO:0033269">
    <property type="term" value="C:internode region of axon"/>
    <property type="evidence" value="ECO:0007669"/>
    <property type="project" value="TreeGrafter"/>
</dbReference>
<dbReference type="GO" id="GO:0043025">
    <property type="term" value="C:neuronal cell body"/>
    <property type="evidence" value="ECO:0007669"/>
    <property type="project" value="TreeGrafter"/>
</dbReference>
<dbReference type="GO" id="GO:0005886">
    <property type="term" value="C:plasma membrane"/>
    <property type="evidence" value="ECO:0007669"/>
    <property type="project" value="UniProtKB-KW"/>
</dbReference>
<dbReference type="GO" id="GO:0019911">
    <property type="term" value="F:structural constituent of myelin sheath"/>
    <property type="evidence" value="ECO:0007669"/>
    <property type="project" value="InterPro"/>
</dbReference>
<dbReference type="GO" id="GO:0042552">
    <property type="term" value="P:myelination"/>
    <property type="evidence" value="ECO:0007669"/>
    <property type="project" value="TreeGrafter"/>
</dbReference>
<dbReference type="InterPro" id="IPR000548">
    <property type="entry name" value="Myelin_BP"/>
</dbReference>
<dbReference type="PANTHER" id="PTHR11429">
    <property type="entry name" value="MYELIN BASIC PROTEIN"/>
    <property type="match status" value="1"/>
</dbReference>
<dbReference type="PANTHER" id="PTHR11429:SF0">
    <property type="entry name" value="MYELIN BASIC PROTEIN"/>
    <property type="match status" value="1"/>
</dbReference>
<dbReference type="Pfam" id="PF01669">
    <property type="entry name" value="Myelin_MBP"/>
    <property type="match status" value="1"/>
</dbReference>
<dbReference type="PRINTS" id="PR00212">
    <property type="entry name" value="MYELINMBP"/>
</dbReference>
<dbReference type="PROSITE" id="PS00569">
    <property type="entry name" value="MYELIN_MBP"/>
    <property type="match status" value="1"/>
</dbReference>
<sequence>ASQKRPSQRHGSKYLATASTMDHARHGFLPRHRDTGILDSIGRFFGSDRAAPKRGSGKDSHHAARTTHYGSLPQKSQRSQDENPVVHFFKNIVTPRTPPPSQGKGRGLSLSRFSWGAEGQKPGFGYGGRADYKSKGFKGAHDAQGTLSKIFKLGGRDSRSGSPMARR</sequence>
<gene>
    <name type="primary">MBP</name>
</gene>
<reference key="1">
    <citation type="journal article" date="1984" name="J. Neurochem.">
        <title>Sequence of guinea pig myelin basic protein.</title>
        <authorList>
            <person name="Deibler G.E."/>
            <person name="Martenson R.E."/>
            <person name="Krutzsch H.C."/>
            <person name="Kies M.W."/>
        </authorList>
    </citation>
    <scope>PROTEIN SEQUENCE</scope>
</reference>
<reference key="2">
    <citation type="submission" date="1998-06" db="EMBL/GenBank/DDBJ databases">
        <title>DNA vaccination using Guinea pig myelin basic protein coding region in experimental autoimmune encephalomyelitis.</title>
        <authorList>
            <person name="Kim G."/>
            <person name="Tanuma N."/>
            <person name="Matsumoto Y."/>
        </authorList>
    </citation>
    <scope>NUCLEOTIDE SEQUENCE [MRNA] OF 7-156</scope>
    <source>
        <strain>Hartley</strain>
        <tissue>Spinal cord</tissue>
    </source>
</reference>
<reference key="3">
    <citation type="journal article" date="1971" name="J. Biol. Chem.">
        <title>Encephalitogenic fragment of myelin basic protein. Amino acid sequence of bovine, rabbit, guinea pig, monkey, and human fragments.</title>
        <authorList>
            <person name="Shapira R."/>
            <person name="McKneally S.S."/>
            <person name="Chou F."/>
            <person name="Kibler R.F."/>
        </authorList>
    </citation>
    <scope>PROTEIN SEQUENCE OF 45-87</scope>
</reference>
<reference key="4">
    <citation type="journal article" date="1975" name="J. Biol. Chem.">
        <title>The contribution of phosphorylation and loss of COOH-terminal arginine to the microheterogeneity of myelin basic protein.</title>
        <authorList>
            <person name="Deibler G.E."/>
            <person name="Martenson R.E."/>
            <person name="Kramer A.J."/>
            <person name="Kies M.W."/>
        </authorList>
    </citation>
    <scope>POST-TRANSLATIONAL MODIFICATIONS</scope>
</reference>
<feature type="chain" id="PRO_0000158988" description="Myelin basic protein">
    <location>
        <begin position="1"/>
        <end position="167"/>
    </location>
</feature>
<feature type="region of interest" description="Induces experimental autoimmune encephalomyelitis (EAE) 1">
    <location>
        <begin position="45"/>
        <end position="87"/>
    </location>
</feature>
<feature type="region of interest" description="Disordered" evidence="7">
    <location>
        <begin position="46"/>
        <end position="114"/>
    </location>
</feature>
<feature type="region of interest" description="Induces experimental autoimmune encephalomyelitis (EAE) 2">
    <location>
        <begin position="114"/>
        <end position="122"/>
    </location>
</feature>
<feature type="region of interest" description="Disordered" evidence="7">
    <location>
        <begin position="136"/>
        <end position="167"/>
    </location>
</feature>
<feature type="site" description="Cleavage; by CTSG" evidence="2">
    <location>
        <begin position="89"/>
        <end position="90"/>
    </location>
</feature>
<feature type="site" description="Cleavage; by CTSG" evidence="2">
    <location>
        <begin position="113"/>
        <end position="114"/>
    </location>
</feature>
<feature type="modified residue" description="N-acetylalanine" evidence="3">
    <location>
        <position position="1"/>
    </location>
</feature>
<feature type="modified residue" description="Phosphoserine" evidence="3">
    <location>
        <position position="7"/>
    </location>
</feature>
<feature type="modified residue" description="Phosphoserine" evidence="5">
    <location>
        <position position="12"/>
    </location>
</feature>
<feature type="modified residue" description="Phosphotyrosine" evidence="4">
    <location>
        <position position="14"/>
    </location>
</feature>
<feature type="modified residue" description="Phosphothreonine" evidence="4">
    <location>
        <position position="17"/>
    </location>
</feature>
<feature type="modified residue" description="Phosphoserine" evidence="5">
    <location>
        <position position="19"/>
    </location>
</feature>
<feature type="modified residue" description="Phosphothreonine" evidence="4">
    <location>
        <position position="20"/>
    </location>
</feature>
<feature type="modified residue" description="Citrulline" evidence="1">
    <location>
        <position position="25"/>
    </location>
</feature>
<feature type="modified residue" description="Citrulline" evidence="1">
    <location>
        <position position="31"/>
    </location>
</feature>
<feature type="modified residue" description="Phosphothreonine" evidence="5">
    <location>
        <position position="35"/>
    </location>
</feature>
<feature type="modified residue" description="Phosphoserine" evidence="5">
    <location>
        <position position="40"/>
    </location>
</feature>
<feature type="modified residue" description="Omega-N-methylarginine" evidence="5">
    <location>
        <position position="43"/>
    </location>
</feature>
<feature type="modified residue" description="Omega-N-methylarginine" evidence="5">
    <location>
        <position position="49"/>
    </location>
</feature>
<feature type="modified residue" description="Phosphoserine" evidence="3">
    <location>
        <position position="56"/>
    </location>
</feature>
<feature type="modified residue" description="Phosphothreonine" evidence="5">
    <location>
        <position position="67"/>
    </location>
</feature>
<feature type="modified residue" description="Phosphotyrosine" evidence="5">
    <location>
        <position position="69"/>
    </location>
</feature>
<feature type="modified residue" description="Phosphoserine" evidence="5">
    <location>
        <position position="76"/>
    </location>
</feature>
<feature type="modified residue" description="Phosphothreonine" evidence="4">
    <location>
        <position position="94"/>
    </location>
</feature>
<feature type="modified residue" description="Phosphothreonine" evidence="3">
    <location>
        <position position="97"/>
    </location>
</feature>
<feature type="modified residue" description="Deamidated glutamine" evidence="1">
    <location>
        <position position="102"/>
    </location>
</feature>
<feature type="modified residue" description="Omega-N-methylarginine; alternate" evidence="3">
    <location>
        <position position="106"/>
    </location>
</feature>
<feature type="modified residue" description="Symmetric dimethylarginine; alternate" evidence="3">
    <location>
        <position position="106"/>
    </location>
</feature>
<feature type="modified residue" description="Phosphoserine" evidence="6">
    <location>
        <position position="114"/>
    </location>
</feature>
<feature type="modified residue" description="N6-acetyllysine" evidence="3">
    <location>
        <position position="121"/>
    </location>
</feature>
<feature type="modified residue" description="Citrulline" evidence="1">
    <location>
        <position position="129"/>
    </location>
</feature>
<feature type="modified residue" description="Deamidated glutamine" evidence="1">
    <location>
        <position position="144"/>
    </location>
</feature>
<feature type="modified residue" description="Citrulline" evidence="1">
    <location>
        <position position="156"/>
    </location>
</feature>
<feature type="modified residue" description="Phosphoserine" evidence="3">
    <location>
        <position position="158"/>
    </location>
</feature>
<feature type="modified residue" description="Phosphoserine; by UHMK1" evidence="3">
    <location>
        <position position="162"/>
    </location>
</feature>
<feature type="modified residue" description="Citrulline" evidence="1">
    <location>
        <position position="167"/>
    </location>
</feature>
<protein>
    <recommendedName>
        <fullName>Myelin basic protein</fullName>
        <shortName>MBP</shortName>
    </recommendedName>
</protein>
<evidence type="ECO:0000250" key="1"/>
<evidence type="ECO:0000250" key="2">
    <source>
        <dbReference type="UniProtKB" id="P02686"/>
    </source>
</evidence>
<evidence type="ECO:0000250" key="3">
    <source>
        <dbReference type="UniProtKB" id="P02687"/>
    </source>
</evidence>
<evidence type="ECO:0000250" key="4">
    <source>
        <dbReference type="UniProtKB" id="P02688"/>
    </source>
</evidence>
<evidence type="ECO:0000250" key="5">
    <source>
        <dbReference type="UniProtKB" id="P04370"/>
    </source>
</evidence>
<evidence type="ECO:0000250" key="6">
    <source>
        <dbReference type="UniProtKB" id="P25274"/>
    </source>
</evidence>
<evidence type="ECO:0000256" key="7">
    <source>
        <dbReference type="SAM" id="MobiDB-lite"/>
    </source>
</evidence>
<evidence type="ECO:0000269" key="8">
    <source>
    </source>
</evidence>
<evidence type="ECO:0000305" key="9"/>
<keyword id="KW-0007">Acetylation</keyword>
<keyword id="KW-0069">Autoimmune encephalomyelitis</keyword>
<keyword id="KW-1003">Cell membrane</keyword>
<keyword id="KW-0164">Citrullination</keyword>
<keyword id="KW-0903">Direct protein sequencing</keyword>
<keyword id="KW-0472">Membrane</keyword>
<keyword id="KW-0488">Methylation</keyword>
<keyword id="KW-0597">Phosphoprotein</keyword>
<keyword id="KW-1185">Reference proteome</keyword>
<name>MBP_CAVPO</name>